<proteinExistence type="inferred from homology"/>
<comment type="function">
    <text evidence="1">One of the essential components for the initiation of protein synthesis. Stabilizes the binding of IF-2 and IF-3 on the 30S subunit to which N-formylmethionyl-tRNA(fMet) subsequently binds. Helps modulate mRNA selection, yielding the 30S pre-initiation complex (PIC). Upon addition of the 50S ribosomal subunit IF-1, IF-2 and IF-3 are released leaving the mature 70S translation initiation complex.</text>
</comment>
<comment type="subunit">
    <text evidence="1">Component of the 30S ribosomal translation pre-initiation complex which assembles on the 30S ribosome in the order IF-2 and IF-3, IF-1 and N-formylmethionyl-tRNA(fMet); mRNA recruitment can occur at any time during PIC assembly.</text>
</comment>
<comment type="subcellular location">
    <subcellularLocation>
        <location evidence="1">Cytoplasm</location>
    </subcellularLocation>
</comment>
<comment type="similarity">
    <text evidence="1">Belongs to the IF-1 family.</text>
</comment>
<dbReference type="EMBL" id="AP006627">
    <property type="protein sequence ID" value="BAD62716.1"/>
    <property type="molecule type" value="Genomic_DNA"/>
</dbReference>
<dbReference type="RefSeq" id="WP_011245037.1">
    <property type="nucleotide sequence ID" value="NC_006582.1"/>
</dbReference>
<dbReference type="SMR" id="Q5WLN9"/>
<dbReference type="STRING" id="66692.ABC0173"/>
<dbReference type="GeneID" id="86924209"/>
<dbReference type="KEGG" id="bcl:ABC0173"/>
<dbReference type="eggNOG" id="COG0361">
    <property type="taxonomic scope" value="Bacteria"/>
</dbReference>
<dbReference type="HOGENOM" id="CLU_151267_1_0_9"/>
<dbReference type="OrthoDB" id="9803250at2"/>
<dbReference type="Proteomes" id="UP000001168">
    <property type="component" value="Chromosome"/>
</dbReference>
<dbReference type="GO" id="GO:0005829">
    <property type="term" value="C:cytosol"/>
    <property type="evidence" value="ECO:0007669"/>
    <property type="project" value="TreeGrafter"/>
</dbReference>
<dbReference type="GO" id="GO:0043022">
    <property type="term" value="F:ribosome binding"/>
    <property type="evidence" value="ECO:0007669"/>
    <property type="project" value="UniProtKB-UniRule"/>
</dbReference>
<dbReference type="GO" id="GO:0019843">
    <property type="term" value="F:rRNA binding"/>
    <property type="evidence" value="ECO:0007669"/>
    <property type="project" value="UniProtKB-UniRule"/>
</dbReference>
<dbReference type="GO" id="GO:0003743">
    <property type="term" value="F:translation initiation factor activity"/>
    <property type="evidence" value="ECO:0007669"/>
    <property type="project" value="UniProtKB-UniRule"/>
</dbReference>
<dbReference type="CDD" id="cd04451">
    <property type="entry name" value="S1_IF1"/>
    <property type="match status" value="1"/>
</dbReference>
<dbReference type="FunFam" id="2.40.50.140:FF:000002">
    <property type="entry name" value="Translation initiation factor IF-1"/>
    <property type="match status" value="1"/>
</dbReference>
<dbReference type="Gene3D" id="2.40.50.140">
    <property type="entry name" value="Nucleic acid-binding proteins"/>
    <property type="match status" value="1"/>
</dbReference>
<dbReference type="HAMAP" id="MF_00075">
    <property type="entry name" value="IF_1"/>
    <property type="match status" value="1"/>
</dbReference>
<dbReference type="InterPro" id="IPR012340">
    <property type="entry name" value="NA-bd_OB-fold"/>
</dbReference>
<dbReference type="InterPro" id="IPR006196">
    <property type="entry name" value="RNA-binding_domain_S1_IF1"/>
</dbReference>
<dbReference type="InterPro" id="IPR003029">
    <property type="entry name" value="S1_domain"/>
</dbReference>
<dbReference type="InterPro" id="IPR004368">
    <property type="entry name" value="TIF_IF1"/>
</dbReference>
<dbReference type="NCBIfam" id="TIGR00008">
    <property type="entry name" value="infA"/>
    <property type="match status" value="1"/>
</dbReference>
<dbReference type="PANTHER" id="PTHR33370">
    <property type="entry name" value="TRANSLATION INITIATION FACTOR IF-1, CHLOROPLASTIC"/>
    <property type="match status" value="1"/>
</dbReference>
<dbReference type="PANTHER" id="PTHR33370:SF1">
    <property type="entry name" value="TRANSLATION INITIATION FACTOR IF-1, CHLOROPLASTIC"/>
    <property type="match status" value="1"/>
</dbReference>
<dbReference type="Pfam" id="PF01176">
    <property type="entry name" value="eIF-1a"/>
    <property type="match status" value="1"/>
</dbReference>
<dbReference type="SMART" id="SM00316">
    <property type="entry name" value="S1"/>
    <property type="match status" value="1"/>
</dbReference>
<dbReference type="SUPFAM" id="SSF50249">
    <property type="entry name" value="Nucleic acid-binding proteins"/>
    <property type="match status" value="1"/>
</dbReference>
<dbReference type="PROSITE" id="PS50832">
    <property type="entry name" value="S1_IF1_TYPE"/>
    <property type="match status" value="1"/>
</dbReference>
<gene>
    <name evidence="1" type="primary">infA</name>
    <name type="ordered locus">ABC0173</name>
</gene>
<accession>Q5WLN9</accession>
<name>IF1_SHOC1</name>
<evidence type="ECO:0000255" key="1">
    <source>
        <dbReference type="HAMAP-Rule" id="MF_00075"/>
    </source>
</evidence>
<reference key="1">
    <citation type="submission" date="2003-10" db="EMBL/GenBank/DDBJ databases">
        <title>The complete genome sequence of the alkaliphilic Bacillus clausii KSM-K16.</title>
        <authorList>
            <person name="Takaki Y."/>
            <person name="Kageyama Y."/>
            <person name="Shimamura S."/>
            <person name="Suzuki H."/>
            <person name="Nishi S."/>
            <person name="Hatada Y."/>
            <person name="Kawai S."/>
            <person name="Ito S."/>
            <person name="Horikoshi K."/>
        </authorList>
    </citation>
    <scope>NUCLEOTIDE SEQUENCE [LARGE SCALE GENOMIC DNA]</scope>
    <source>
        <strain>KSM-K16</strain>
    </source>
</reference>
<organism>
    <name type="scientific">Shouchella clausii (strain KSM-K16)</name>
    <name type="common">Alkalihalobacillus clausii</name>
    <dbReference type="NCBI Taxonomy" id="66692"/>
    <lineage>
        <taxon>Bacteria</taxon>
        <taxon>Bacillati</taxon>
        <taxon>Bacillota</taxon>
        <taxon>Bacilli</taxon>
        <taxon>Bacillales</taxon>
        <taxon>Bacillaceae</taxon>
        <taxon>Shouchella</taxon>
    </lineage>
</organism>
<protein>
    <recommendedName>
        <fullName evidence="1">Translation initiation factor IF-1</fullName>
    </recommendedName>
</protein>
<sequence length="72" mass="8270">MAKEDVIEVEGTVIEPLPNAMFRVELENGHKILAHVSGKIRMNFIRILPGDKVTVELSPYDLTRGRITYRYK</sequence>
<feature type="chain" id="PRO_0000095737" description="Translation initiation factor IF-1">
    <location>
        <begin position="1"/>
        <end position="72"/>
    </location>
</feature>
<feature type="domain" description="S1-like" evidence="1">
    <location>
        <begin position="1"/>
        <end position="72"/>
    </location>
</feature>
<feature type="modified residue" description="Phosphotyrosine" evidence="1">
    <location>
        <position position="60"/>
    </location>
</feature>
<keyword id="KW-0963">Cytoplasm</keyword>
<keyword id="KW-0396">Initiation factor</keyword>
<keyword id="KW-0597">Phosphoprotein</keyword>
<keyword id="KW-0648">Protein biosynthesis</keyword>
<keyword id="KW-1185">Reference proteome</keyword>
<keyword id="KW-0694">RNA-binding</keyword>
<keyword id="KW-0699">rRNA-binding</keyword>